<comment type="function">
    <text evidence="1">Presumably involved in the processing and regular turnover of intracellular proteins. Catalyzes the removal of unsubstituted N-terminal amino acids from various peptides.</text>
</comment>
<comment type="catalytic activity">
    <reaction evidence="1">
        <text>Release of an N-terminal amino acid, Xaa-|-Yaa-, in which Xaa is preferably Leu, but may be other amino acids including Pro although not Arg or Lys, and Yaa may be Pro. Amino acid amides and methyl esters are also readily hydrolyzed, but rates on arylamides are exceedingly low.</text>
        <dbReference type="EC" id="3.4.11.1"/>
    </reaction>
</comment>
<comment type="catalytic activity">
    <reaction evidence="1">
        <text>Release of an N-terminal amino acid, preferentially leucine, but not glutamic or aspartic acids.</text>
        <dbReference type="EC" id="3.4.11.10"/>
    </reaction>
</comment>
<comment type="cofactor">
    <cofactor evidence="1">
        <name>Mn(2+)</name>
        <dbReference type="ChEBI" id="CHEBI:29035"/>
    </cofactor>
    <text evidence="1">Binds 2 manganese ions per subunit.</text>
</comment>
<comment type="subcellular location">
    <subcellularLocation>
        <location evidence="1">Cytoplasm</location>
    </subcellularLocation>
</comment>
<comment type="similarity">
    <text evidence="1">Belongs to the peptidase M17 family.</text>
</comment>
<feature type="chain" id="PRO_1000098356" description="Probable cytosol aminopeptidase">
    <location>
        <begin position="1"/>
        <end position="491"/>
    </location>
</feature>
<feature type="active site" evidence="1">
    <location>
        <position position="273"/>
    </location>
</feature>
<feature type="active site" evidence="1">
    <location>
        <position position="348"/>
    </location>
</feature>
<feature type="binding site" evidence="1">
    <location>
        <position position="261"/>
    </location>
    <ligand>
        <name>Mn(2+)</name>
        <dbReference type="ChEBI" id="CHEBI:29035"/>
        <label>2</label>
    </ligand>
</feature>
<feature type="binding site" evidence="1">
    <location>
        <position position="266"/>
    </location>
    <ligand>
        <name>Mn(2+)</name>
        <dbReference type="ChEBI" id="CHEBI:29035"/>
        <label>1</label>
    </ligand>
</feature>
<feature type="binding site" evidence="1">
    <location>
        <position position="266"/>
    </location>
    <ligand>
        <name>Mn(2+)</name>
        <dbReference type="ChEBI" id="CHEBI:29035"/>
        <label>2</label>
    </ligand>
</feature>
<feature type="binding site" evidence="1">
    <location>
        <position position="285"/>
    </location>
    <ligand>
        <name>Mn(2+)</name>
        <dbReference type="ChEBI" id="CHEBI:29035"/>
        <label>2</label>
    </ligand>
</feature>
<feature type="binding site" evidence="1">
    <location>
        <position position="344"/>
    </location>
    <ligand>
        <name>Mn(2+)</name>
        <dbReference type="ChEBI" id="CHEBI:29035"/>
        <label>1</label>
    </ligand>
</feature>
<feature type="binding site" evidence="1">
    <location>
        <position position="346"/>
    </location>
    <ligand>
        <name>Mn(2+)</name>
        <dbReference type="ChEBI" id="CHEBI:29035"/>
        <label>1</label>
    </ligand>
</feature>
<feature type="binding site" evidence="1">
    <location>
        <position position="346"/>
    </location>
    <ligand>
        <name>Mn(2+)</name>
        <dbReference type="ChEBI" id="CHEBI:29035"/>
        <label>2</label>
    </ligand>
</feature>
<accession>B1XK83</accession>
<protein>
    <recommendedName>
        <fullName evidence="1">Probable cytosol aminopeptidase</fullName>
        <ecNumber evidence="1">3.4.11.1</ecNumber>
    </recommendedName>
    <alternativeName>
        <fullName evidence="1">Leucine aminopeptidase</fullName>
        <shortName evidence="1">LAP</shortName>
        <ecNumber evidence="1">3.4.11.10</ecNumber>
    </alternativeName>
    <alternativeName>
        <fullName evidence="1">Leucyl aminopeptidase</fullName>
    </alternativeName>
</protein>
<dbReference type="EC" id="3.4.11.1" evidence="1"/>
<dbReference type="EC" id="3.4.11.10" evidence="1"/>
<dbReference type="EMBL" id="CP000951">
    <property type="protein sequence ID" value="ACB00438.1"/>
    <property type="molecule type" value="Genomic_DNA"/>
</dbReference>
<dbReference type="RefSeq" id="WP_012308056.1">
    <property type="nucleotide sequence ID" value="NZ_JAHHPU010000003.1"/>
</dbReference>
<dbReference type="SMR" id="B1XK83"/>
<dbReference type="STRING" id="32049.SYNPCC7002_A2460"/>
<dbReference type="MEROPS" id="M17.A03"/>
<dbReference type="KEGG" id="syp:SYNPCC7002_A2460"/>
<dbReference type="eggNOG" id="COG0260">
    <property type="taxonomic scope" value="Bacteria"/>
</dbReference>
<dbReference type="HOGENOM" id="CLU_013734_5_1_3"/>
<dbReference type="Proteomes" id="UP000001688">
    <property type="component" value="Chromosome"/>
</dbReference>
<dbReference type="GO" id="GO:0005737">
    <property type="term" value="C:cytoplasm"/>
    <property type="evidence" value="ECO:0007669"/>
    <property type="project" value="UniProtKB-SubCell"/>
</dbReference>
<dbReference type="GO" id="GO:0030145">
    <property type="term" value="F:manganese ion binding"/>
    <property type="evidence" value="ECO:0007669"/>
    <property type="project" value="UniProtKB-UniRule"/>
</dbReference>
<dbReference type="GO" id="GO:0070006">
    <property type="term" value="F:metalloaminopeptidase activity"/>
    <property type="evidence" value="ECO:0007669"/>
    <property type="project" value="InterPro"/>
</dbReference>
<dbReference type="GO" id="GO:0006508">
    <property type="term" value="P:proteolysis"/>
    <property type="evidence" value="ECO:0007669"/>
    <property type="project" value="UniProtKB-KW"/>
</dbReference>
<dbReference type="CDD" id="cd00433">
    <property type="entry name" value="Peptidase_M17"/>
    <property type="match status" value="1"/>
</dbReference>
<dbReference type="Gene3D" id="3.40.220.10">
    <property type="entry name" value="Leucine Aminopeptidase, subunit E, domain 1"/>
    <property type="match status" value="1"/>
</dbReference>
<dbReference type="Gene3D" id="3.40.630.10">
    <property type="entry name" value="Zn peptidases"/>
    <property type="match status" value="1"/>
</dbReference>
<dbReference type="HAMAP" id="MF_00181">
    <property type="entry name" value="Cytosol_peptidase_M17"/>
    <property type="match status" value="1"/>
</dbReference>
<dbReference type="InterPro" id="IPR011356">
    <property type="entry name" value="Leucine_aapep/pepB"/>
</dbReference>
<dbReference type="InterPro" id="IPR043472">
    <property type="entry name" value="Macro_dom-like"/>
</dbReference>
<dbReference type="InterPro" id="IPR000819">
    <property type="entry name" value="Peptidase_M17_C"/>
</dbReference>
<dbReference type="InterPro" id="IPR023042">
    <property type="entry name" value="Peptidase_M17_leu_NH2_pept"/>
</dbReference>
<dbReference type="InterPro" id="IPR008283">
    <property type="entry name" value="Peptidase_M17_N"/>
</dbReference>
<dbReference type="NCBIfam" id="NF002073">
    <property type="entry name" value="PRK00913.1-2"/>
    <property type="match status" value="1"/>
</dbReference>
<dbReference type="NCBIfam" id="NF002074">
    <property type="entry name" value="PRK00913.1-4"/>
    <property type="match status" value="1"/>
</dbReference>
<dbReference type="NCBIfam" id="NF002076">
    <property type="entry name" value="PRK00913.2-3"/>
    <property type="match status" value="1"/>
</dbReference>
<dbReference type="NCBIfam" id="NF002083">
    <property type="entry name" value="PRK00913.3-5"/>
    <property type="match status" value="1"/>
</dbReference>
<dbReference type="PANTHER" id="PTHR11963:SF23">
    <property type="entry name" value="CYTOSOL AMINOPEPTIDASE"/>
    <property type="match status" value="1"/>
</dbReference>
<dbReference type="PANTHER" id="PTHR11963">
    <property type="entry name" value="LEUCINE AMINOPEPTIDASE-RELATED"/>
    <property type="match status" value="1"/>
</dbReference>
<dbReference type="Pfam" id="PF00883">
    <property type="entry name" value="Peptidase_M17"/>
    <property type="match status" value="1"/>
</dbReference>
<dbReference type="Pfam" id="PF02789">
    <property type="entry name" value="Peptidase_M17_N"/>
    <property type="match status" value="1"/>
</dbReference>
<dbReference type="PRINTS" id="PR00481">
    <property type="entry name" value="LAMNOPPTDASE"/>
</dbReference>
<dbReference type="SUPFAM" id="SSF52949">
    <property type="entry name" value="Macro domain-like"/>
    <property type="match status" value="1"/>
</dbReference>
<dbReference type="SUPFAM" id="SSF53187">
    <property type="entry name" value="Zn-dependent exopeptidases"/>
    <property type="match status" value="1"/>
</dbReference>
<dbReference type="PROSITE" id="PS00631">
    <property type="entry name" value="CYTOSOL_AP"/>
    <property type="match status" value="1"/>
</dbReference>
<name>AMPA_PICP2</name>
<keyword id="KW-0031">Aminopeptidase</keyword>
<keyword id="KW-0963">Cytoplasm</keyword>
<keyword id="KW-0378">Hydrolase</keyword>
<keyword id="KW-0464">Manganese</keyword>
<keyword id="KW-0479">Metal-binding</keyword>
<keyword id="KW-0645">Protease</keyword>
<keyword id="KW-1185">Reference proteome</keyword>
<gene>
    <name evidence="1" type="primary">pepA</name>
    <name type="ordered locus">SYNPCC7002_A2460</name>
</gene>
<reference key="1">
    <citation type="submission" date="2008-02" db="EMBL/GenBank/DDBJ databases">
        <title>Complete sequence of Synechococcus sp. PCC 7002.</title>
        <authorList>
            <person name="Li T."/>
            <person name="Zhao J."/>
            <person name="Zhao C."/>
            <person name="Liu Z."/>
            <person name="Zhao F."/>
            <person name="Marquardt J."/>
            <person name="Nomura C.T."/>
            <person name="Persson S."/>
            <person name="Detter J.C."/>
            <person name="Richardson P.M."/>
            <person name="Lanz C."/>
            <person name="Schuster S.C."/>
            <person name="Wang J."/>
            <person name="Li S."/>
            <person name="Huang X."/>
            <person name="Cai T."/>
            <person name="Yu Z."/>
            <person name="Luo J."/>
            <person name="Zhao J."/>
            <person name="Bryant D.A."/>
        </authorList>
    </citation>
    <scope>NUCLEOTIDE SEQUENCE [LARGE SCALE GENOMIC DNA]</scope>
    <source>
        <strain>ATCC 27264 / PCC 7002 / PR-6</strain>
    </source>
</reference>
<organism>
    <name type="scientific">Picosynechococcus sp. (strain ATCC 27264 / PCC 7002 / PR-6)</name>
    <name type="common">Agmenellum quadruplicatum</name>
    <dbReference type="NCBI Taxonomy" id="32049"/>
    <lineage>
        <taxon>Bacteria</taxon>
        <taxon>Bacillati</taxon>
        <taxon>Cyanobacteriota</taxon>
        <taxon>Cyanophyceae</taxon>
        <taxon>Oscillatoriophycideae</taxon>
        <taxon>Chroococcales</taxon>
        <taxon>Geminocystaceae</taxon>
        <taxon>Picosynechococcus</taxon>
    </lineage>
</organism>
<sequence length="491" mass="51522">MEIRGSSQTAAAWAGEAIALGFFESETVLTVPENLTALDERLSGVIAEVIAETEFKGKSGKLSVTRLGSGAPIKKLLLVGLGNAEKWNSAVLRSTAAAIARAVKGDKAITTLGLQLPVAETEAITAQMVTEGMYLGFYEDNRFKSEQKDPPALEAVEILGIGDQPAAIALGTSLCEGVIYARELVNAPANIINPVTLAASVESLASTYGLELNILEEADCEAAGMGSFLGVAAASDLPPKFIHLVYKPLGTPRKKVAIVGKGLTFDSGGYNIKPSGPSIAMMKMDMGGAAATFGAAKAIAELKPDVEVHFISAATENMISGRGMRPGDILTASNGKTIEVNNTDAEGRLTLADALVYAEKLGVEAIVDIATLTGACVIALGDDICGLWSDNDDLAQAIATASEKAGEKFWQMPLEEKYFEGLKSPIADMKNTGPREGGSITAALFLKEFVENTPWAHLDIAGPAWSEKDADIYSKGGTGFPVRTLVHWVLS</sequence>
<evidence type="ECO:0000255" key="1">
    <source>
        <dbReference type="HAMAP-Rule" id="MF_00181"/>
    </source>
</evidence>
<proteinExistence type="inferred from homology"/>